<accession>P0DSR8</accession>
<accession>P33844</accession>
<comment type="function">
    <text evidence="1">Envelope protein part of the entry-fusion complex responsible for the virus membrane fusion with host cell membrane during virus entry. Also plays a role in cell-cell fusion (syncytium formation).</text>
</comment>
<comment type="subunit">
    <text evidence="1">Part of a stable entry-fusion complex (EFC) which is at least composed of proteins OPG143, OPG147, OPG155, OPG086, OPG094, OPG107, OPG104, and OPG099. Formation of the viral membrane is necessary for the assembly of the complex.</text>
</comment>
<comment type="subcellular location">
    <subcellularLocation>
        <location evidence="1">Virion membrane</location>
        <topology evidence="1">Single-pass type III membrane protein</topology>
    </subcellularLocation>
    <text evidence="1">Component of the mature virion (MV) membrane. The mature virion is located in the cytoplasm of infected cells and is probably released by cell lysis.</text>
</comment>
<comment type="PTM">
    <text evidence="1">Contains two intramolecular disulfide bonds. They are created by the viral disulfide bond formation pathway, a poxvirus-specific pathway that operates on the cytoplasmic side of the MV membranes.</text>
</comment>
<comment type="similarity">
    <text evidence="3">Belongs to the orthopoxvirus OPG147 family.</text>
</comment>
<proteinExistence type="inferred from homology"/>
<feature type="chain" id="PRO_0000448160" description="Virion membrane protein OPG147">
    <location>
        <begin position="1"/>
        <end position="117"/>
    </location>
</feature>
<feature type="transmembrane region" description="Helical; Signal-anchor for type III membrane protein" evidence="2">
    <location>
        <begin position="1"/>
        <end position="21"/>
    </location>
</feature>
<feature type="topological domain" description="Virion surface" evidence="2">
    <location>
        <begin position="22"/>
        <end position="117"/>
    </location>
</feature>
<protein>
    <recommendedName>
        <fullName>Virion membrane protein OPG147</fullName>
    </recommendedName>
</protein>
<sequence>MITLFLILCYFILIFNIIVPAISEKMRRERAAYVNYKRLNKNFICVDDRLFSYNFTTSGIKAKVAVDNKNVPIPCSEINEVNNNKDVDTLYCDKDRDDIPGFTRSCYRAYSDLFFTT</sequence>
<organism>
    <name type="scientific">Variola virus</name>
    <dbReference type="NCBI Taxonomy" id="10255"/>
    <lineage>
        <taxon>Viruses</taxon>
        <taxon>Varidnaviria</taxon>
        <taxon>Bamfordvirae</taxon>
        <taxon>Nucleocytoviricota</taxon>
        <taxon>Pokkesviricetes</taxon>
        <taxon>Chitovirales</taxon>
        <taxon>Poxviridae</taxon>
        <taxon>Chordopoxvirinae</taxon>
        <taxon>Orthopoxvirus</taxon>
    </lineage>
</organism>
<evidence type="ECO:0000250" key="1">
    <source>
        <dbReference type="UniProtKB" id="P68712"/>
    </source>
</evidence>
<evidence type="ECO:0000255" key="2"/>
<evidence type="ECO:0000305" key="3"/>
<name>PG147_VARV</name>
<keyword id="KW-1015">Disulfide bond</keyword>
<keyword id="KW-1168">Fusion of virus membrane with host membrane</keyword>
<keyword id="KW-0472">Membrane</keyword>
<keyword id="KW-0597">Phosphoprotein</keyword>
<keyword id="KW-0735">Signal-anchor</keyword>
<keyword id="KW-0812">Transmembrane</keyword>
<keyword id="KW-1133">Transmembrane helix</keyword>
<keyword id="KW-0261">Viral envelope protein</keyword>
<keyword id="KW-1162">Viral penetration into host cytoplasm</keyword>
<keyword id="KW-0946">Virion</keyword>
<keyword id="KW-1160">Virus entry into host cell</keyword>
<dbReference type="EMBL" id="L22579">
    <property type="protein sequence ID" value="AAA60872.1"/>
    <property type="molecule type" value="Genomic_DNA"/>
</dbReference>
<dbReference type="EMBL" id="X76268">
    <property type="protein sequence ID" value="CAA53894.1"/>
    <property type="molecule type" value="Genomic_DNA"/>
</dbReference>
<dbReference type="PIR" id="B72166">
    <property type="entry name" value="B72166"/>
</dbReference>
<dbReference type="PIR" id="T28562">
    <property type="entry name" value="T28562"/>
</dbReference>
<dbReference type="SMR" id="P0DSR8"/>
<dbReference type="KEGG" id="vg:1486496"/>
<dbReference type="Proteomes" id="UP000119805">
    <property type="component" value="Segment"/>
</dbReference>
<dbReference type="GO" id="GO:0016020">
    <property type="term" value="C:membrane"/>
    <property type="evidence" value="ECO:0007669"/>
    <property type="project" value="UniProtKB-KW"/>
</dbReference>
<dbReference type="GO" id="GO:0019031">
    <property type="term" value="C:viral envelope"/>
    <property type="evidence" value="ECO:0007669"/>
    <property type="project" value="UniProtKB-KW"/>
</dbReference>
<dbReference type="GO" id="GO:0055036">
    <property type="term" value="C:virion membrane"/>
    <property type="evidence" value="ECO:0007669"/>
    <property type="project" value="UniProtKB-SubCell"/>
</dbReference>
<dbReference type="GO" id="GO:0039663">
    <property type="term" value="P:membrane fusion involved in viral entry into host cell"/>
    <property type="evidence" value="ECO:0007669"/>
    <property type="project" value="UniProtKB-KW"/>
</dbReference>
<dbReference type="GO" id="GO:0046718">
    <property type="term" value="P:symbiont entry into host cell"/>
    <property type="evidence" value="ECO:0007669"/>
    <property type="project" value="UniProtKB-KW"/>
</dbReference>
<dbReference type="InterPro" id="IPR007987">
    <property type="entry name" value="Poxvirus_A21"/>
</dbReference>
<dbReference type="Pfam" id="PF05323">
    <property type="entry name" value="Pox_A21"/>
    <property type="match status" value="1"/>
</dbReference>
<reference key="1">
    <citation type="journal article" date="1993" name="Nature">
        <title>Potential virulence determinants in terminal regions of variola smallpox virus genome.</title>
        <authorList>
            <person name="Massung R.F."/>
            <person name="Esposito J.J."/>
            <person name="Liu L.I."/>
            <person name="Qi J."/>
            <person name="Utterback T.R."/>
            <person name="Knight J.C."/>
            <person name="Aubin L."/>
            <person name="Yuran T.E."/>
            <person name="Parsons J.M."/>
            <person name="Loparev V.N."/>
            <person name="Selivanov N.A."/>
            <person name="Cavallaro K.F."/>
            <person name="Kerlavage A.R."/>
            <person name="Mahy B.W.J."/>
            <person name="Venter J.C."/>
        </authorList>
    </citation>
    <scope>NUCLEOTIDE SEQUENCE [GENOMIC DNA]</scope>
    <source>
        <strain>Bangladesh-1975</strain>
    </source>
</reference>
<reference key="2">
    <citation type="submission" date="1995-12" db="EMBL/GenBank/DDBJ databases">
        <title>XhoI-D DNA fragment of Variola minor virus strain Garcia-1966.</title>
        <authorList>
            <person name="Shchelkunov S.N."/>
            <person name="Totmenin A.V."/>
            <person name="Sosnovtsev S.V."/>
            <person name="Safronov P.F."/>
            <person name="Resenchuk S.M."/>
            <person name="Blinov V.M."/>
            <person name="Sandakhchiev L.S."/>
        </authorList>
    </citation>
    <scope>NUCLEOTIDE SEQUENCE [GENOMIC DNA]</scope>
    <source>
        <strain>Garcia-1966</strain>
    </source>
</reference>
<gene>
    <name type="primary">OPG147</name>
    <name type="ORF">A21L</name>
</gene>
<organismHost>
    <name type="scientific">Homo sapiens</name>
    <name type="common">Human</name>
    <dbReference type="NCBI Taxonomy" id="9606"/>
</organismHost>